<evidence type="ECO:0000255" key="1"/>
<evidence type="ECO:0000269" key="2">
    <source>
    </source>
</evidence>
<evidence type="ECO:0000305" key="3"/>
<reference key="1">
    <citation type="journal article" date="1994" name="EMBO J.">
        <title>Complete DNA sequence of yeast chromosome II.</title>
        <authorList>
            <person name="Feldmann H."/>
            <person name="Aigle M."/>
            <person name="Aljinovic G."/>
            <person name="Andre B."/>
            <person name="Baclet M.C."/>
            <person name="Barthe C."/>
            <person name="Baur A."/>
            <person name="Becam A.-M."/>
            <person name="Biteau N."/>
            <person name="Boles E."/>
            <person name="Brandt T."/>
            <person name="Brendel M."/>
            <person name="Brueckner M."/>
            <person name="Bussereau F."/>
            <person name="Christiansen C."/>
            <person name="Contreras R."/>
            <person name="Crouzet M."/>
            <person name="Cziepluch C."/>
            <person name="Demolis N."/>
            <person name="Delaveau T."/>
            <person name="Doignon F."/>
            <person name="Domdey H."/>
            <person name="Duesterhus S."/>
            <person name="Dubois E."/>
            <person name="Dujon B."/>
            <person name="El Bakkoury M."/>
            <person name="Entian K.-D."/>
            <person name="Feuermann M."/>
            <person name="Fiers W."/>
            <person name="Fobo G.M."/>
            <person name="Fritz C."/>
            <person name="Gassenhuber J."/>
            <person name="Glansdorff N."/>
            <person name="Goffeau A."/>
            <person name="Grivell L.A."/>
            <person name="de Haan M."/>
            <person name="Hein C."/>
            <person name="Herbert C.J."/>
            <person name="Hollenberg C.P."/>
            <person name="Holmstroem K."/>
            <person name="Jacq C."/>
            <person name="Jacquet M."/>
            <person name="Jauniaux J.-C."/>
            <person name="Jonniaux J.-L."/>
            <person name="Kallesoee T."/>
            <person name="Kiesau P."/>
            <person name="Kirchrath L."/>
            <person name="Koetter P."/>
            <person name="Korol S."/>
            <person name="Liebl S."/>
            <person name="Logghe M."/>
            <person name="Lohan A.J.E."/>
            <person name="Louis E.J."/>
            <person name="Li Z.Y."/>
            <person name="Maat M.J."/>
            <person name="Mallet L."/>
            <person name="Mannhaupt G."/>
            <person name="Messenguy F."/>
            <person name="Miosga T."/>
            <person name="Molemans F."/>
            <person name="Mueller S."/>
            <person name="Nasr F."/>
            <person name="Obermaier B."/>
            <person name="Perea J."/>
            <person name="Pierard A."/>
            <person name="Piravandi E."/>
            <person name="Pohl F.M."/>
            <person name="Pohl T.M."/>
            <person name="Potier S."/>
            <person name="Proft M."/>
            <person name="Purnelle B."/>
            <person name="Ramezani Rad M."/>
            <person name="Rieger M."/>
            <person name="Rose M."/>
            <person name="Schaaff-Gerstenschlaeger I."/>
            <person name="Scherens B."/>
            <person name="Schwarzlose C."/>
            <person name="Skala J."/>
            <person name="Slonimski P.P."/>
            <person name="Smits P.H.M."/>
            <person name="Souciet J.-L."/>
            <person name="Steensma H.Y."/>
            <person name="Stucka R."/>
            <person name="Urrestarazu L.A."/>
            <person name="van der Aart Q.J.M."/>
            <person name="Van Dyck L."/>
            <person name="Vassarotti A."/>
            <person name="Vetter I."/>
            <person name="Vierendeels F."/>
            <person name="Vissers S."/>
            <person name="Wagner G."/>
            <person name="de Wergifosse P."/>
            <person name="Wolfe K.H."/>
            <person name="Zagulski M."/>
            <person name="Zimmermann F.K."/>
            <person name="Mewes H.-W."/>
            <person name="Kleine K."/>
        </authorList>
    </citation>
    <scope>NUCLEOTIDE SEQUENCE [LARGE SCALE GENOMIC DNA]</scope>
    <source>
        <strain>ATCC 204508 / S288c</strain>
    </source>
</reference>
<reference key="2">
    <citation type="journal article" date="2014" name="G3 (Bethesda)">
        <title>The reference genome sequence of Saccharomyces cerevisiae: Then and now.</title>
        <authorList>
            <person name="Engel S.R."/>
            <person name="Dietrich F.S."/>
            <person name="Fisk D.G."/>
            <person name="Binkley G."/>
            <person name="Balakrishnan R."/>
            <person name="Costanzo M.C."/>
            <person name="Dwight S.S."/>
            <person name="Hitz B.C."/>
            <person name="Karra K."/>
            <person name="Nash R.S."/>
            <person name="Weng S."/>
            <person name="Wong E.D."/>
            <person name="Lloyd P."/>
            <person name="Skrzypek M.S."/>
            <person name="Miyasato S.R."/>
            <person name="Simison M."/>
            <person name="Cherry J.M."/>
        </authorList>
    </citation>
    <scope>GENOME REANNOTATION</scope>
    <source>
        <strain>ATCC 204508 / S288c</strain>
    </source>
</reference>
<reference key="3">
    <citation type="journal article" date="2007" name="Genome Res.">
        <title>Approaching a complete repository of sequence-verified protein-encoding clones for Saccharomyces cerevisiae.</title>
        <authorList>
            <person name="Hu Y."/>
            <person name="Rolfs A."/>
            <person name="Bhullar B."/>
            <person name="Murthy T.V.S."/>
            <person name="Zhu C."/>
            <person name="Berger M.F."/>
            <person name="Camargo A.A."/>
            <person name="Kelley F."/>
            <person name="McCarron S."/>
            <person name="Jepson D."/>
            <person name="Richardson A."/>
            <person name="Raphael J."/>
            <person name="Moreira D."/>
            <person name="Taycher E."/>
            <person name="Zuo D."/>
            <person name="Mohr S."/>
            <person name="Kane M.F."/>
            <person name="Williamson J."/>
            <person name="Simpson A.J.G."/>
            <person name="Bulyk M.L."/>
            <person name="Harlow E."/>
            <person name="Marsischky G."/>
            <person name="Kolodner R.D."/>
            <person name="LaBaer J."/>
        </authorList>
    </citation>
    <scope>NUCLEOTIDE SEQUENCE [GENOMIC DNA]</scope>
    <source>
        <strain>ATCC 204508 / S288c</strain>
    </source>
</reference>
<reference key="4">
    <citation type="journal article" date="2003" name="Nature">
        <title>Global analysis of protein localization in budding yeast.</title>
        <authorList>
            <person name="Huh W.-K."/>
            <person name="Falvo J.V."/>
            <person name="Gerke L.C."/>
            <person name="Carroll A.S."/>
            <person name="Howson R.W."/>
            <person name="Weissman J.S."/>
            <person name="O'Shea E.K."/>
        </authorList>
    </citation>
    <scope>SUBCELLULAR LOCATION [LARGE SCALE ANALYSIS]</scope>
</reference>
<reference key="5">
    <citation type="journal article" date="2006" name="Proc. Natl. Acad. Sci. U.S.A.">
        <title>A global topology map of the Saccharomyces cerevisiae membrane proteome.</title>
        <authorList>
            <person name="Kim H."/>
            <person name="Melen K."/>
            <person name="Oesterberg M."/>
            <person name="von Heijne G."/>
        </authorList>
    </citation>
    <scope>TOPOLOGY [LARGE SCALE ANALYSIS]</scope>
    <source>
        <strain>ATCC 208353 / W303-1A</strain>
    </source>
</reference>
<feature type="chain" id="PRO_0000202502" description="Peroxisomal membrane protein PEX32">
    <location>
        <begin position="1"/>
        <end position="413"/>
    </location>
</feature>
<feature type="topological domain" description="Peroxisomal" evidence="1">
    <location>
        <begin position="1"/>
        <end position="66"/>
    </location>
</feature>
<feature type="transmembrane region" description="Helical" evidence="1">
    <location>
        <begin position="67"/>
        <end position="87"/>
    </location>
</feature>
<feature type="topological domain" description="Cytoplasmic" evidence="1">
    <location>
        <begin position="88"/>
        <end position="103"/>
    </location>
</feature>
<feature type="transmembrane region" description="Helical" evidence="1">
    <location>
        <begin position="104"/>
        <end position="124"/>
    </location>
</feature>
<feature type="topological domain" description="Peroxisomal" evidence="1">
    <location>
        <begin position="125"/>
        <end position="181"/>
    </location>
</feature>
<feature type="transmembrane region" description="Helical" evidence="1">
    <location>
        <begin position="182"/>
        <end position="202"/>
    </location>
</feature>
<feature type="topological domain" description="Cytoplasmic" evidence="1">
    <location>
        <begin position="203"/>
        <end position="413"/>
    </location>
</feature>
<feature type="sequence conflict" description="In Ref. 3; AAT92707." evidence="3" ref="3">
    <original>S</original>
    <variation>P</variation>
    <location>
        <position position="165"/>
    </location>
</feature>
<proteinExistence type="evidence at protein level"/>
<accession>P38292</accession>
<accession>D6VQG4</accession>
<accession>E9P8W7</accession>
<gene>
    <name type="primary">PEX32</name>
    <name type="ordered locus">YBR168W</name>
    <name type="ORF">YBR1220</name>
</gene>
<name>PEX32_YEAST</name>
<organism>
    <name type="scientific">Saccharomyces cerevisiae (strain ATCC 204508 / S288c)</name>
    <name type="common">Baker's yeast</name>
    <dbReference type="NCBI Taxonomy" id="559292"/>
    <lineage>
        <taxon>Eukaryota</taxon>
        <taxon>Fungi</taxon>
        <taxon>Dikarya</taxon>
        <taxon>Ascomycota</taxon>
        <taxon>Saccharomycotina</taxon>
        <taxon>Saccharomycetes</taxon>
        <taxon>Saccharomycetales</taxon>
        <taxon>Saccharomycetaceae</taxon>
        <taxon>Saccharomyces</taxon>
    </lineage>
</organism>
<protein>
    <recommendedName>
        <fullName>Peroxisomal membrane protein PEX32</fullName>
    </recommendedName>
    <alternativeName>
        <fullName>Peroxin-32</fullName>
    </alternativeName>
</protein>
<dbReference type="EMBL" id="Z36037">
    <property type="protein sequence ID" value="CAA85129.1"/>
    <property type="molecule type" value="Genomic_DNA"/>
</dbReference>
<dbReference type="EMBL" id="AY692688">
    <property type="protein sequence ID" value="AAT92707.1"/>
    <property type="molecule type" value="Genomic_DNA"/>
</dbReference>
<dbReference type="EMBL" id="BK006936">
    <property type="protein sequence ID" value="DAA07284.1"/>
    <property type="molecule type" value="Genomic_DNA"/>
</dbReference>
<dbReference type="PIR" id="S46039">
    <property type="entry name" value="S46039"/>
</dbReference>
<dbReference type="RefSeq" id="NP_009727.3">
    <property type="nucleotide sequence ID" value="NM_001178516.3"/>
</dbReference>
<dbReference type="SMR" id="P38292"/>
<dbReference type="BioGRID" id="32868">
    <property type="interactions" value="201"/>
</dbReference>
<dbReference type="DIP" id="DIP-5361N"/>
<dbReference type="FunCoup" id="P38292">
    <property type="interactions" value="67"/>
</dbReference>
<dbReference type="IntAct" id="P38292">
    <property type="interactions" value="2"/>
</dbReference>
<dbReference type="MINT" id="P38292"/>
<dbReference type="STRING" id="4932.YBR168W"/>
<dbReference type="TCDB" id="3.A.20.1.5">
    <property type="family name" value="the peroxisomal protein importer (ppi) family"/>
</dbReference>
<dbReference type="PaxDb" id="4932-YBR168W"/>
<dbReference type="PeptideAtlas" id="P38292"/>
<dbReference type="EnsemblFungi" id="YBR168W_mRNA">
    <property type="protein sequence ID" value="YBR168W"/>
    <property type="gene ID" value="YBR168W"/>
</dbReference>
<dbReference type="GeneID" id="852466"/>
<dbReference type="KEGG" id="sce:YBR168W"/>
<dbReference type="AGR" id="SGD:S000000372"/>
<dbReference type="SGD" id="S000000372">
    <property type="gene designation" value="PEX32"/>
</dbReference>
<dbReference type="VEuPathDB" id="FungiDB:YBR168W"/>
<dbReference type="eggNOG" id="ENOG502QU0V">
    <property type="taxonomic scope" value="Eukaryota"/>
</dbReference>
<dbReference type="GeneTree" id="ENSGT00940000176349"/>
<dbReference type="HOGENOM" id="CLU_665907_0_0_1"/>
<dbReference type="InParanoid" id="P38292"/>
<dbReference type="OMA" id="TDWIYSD"/>
<dbReference type="OrthoDB" id="5586090at2759"/>
<dbReference type="BioCyc" id="YEAST:G3O-29116-MONOMER"/>
<dbReference type="BioGRID-ORCS" id="852466">
    <property type="hits" value="0 hits in 10 CRISPR screens"/>
</dbReference>
<dbReference type="PRO" id="PR:P38292"/>
<dbReference type="Proteomes" id="UP000002311">
    <property type="component" value="Chromosome II"/>
</dbReference>
<dbReference type="RNAct" id="P38292">
    <property type="molecule type" value="protein"/>
</dbReference>
<dbReference type="GO" id="GO:0005778">
    <property type="term" value="C:peroxisomal membrane"/>
    <property type="evidence" value="ECO:0000314"/>
    <property type="project" value="SGD"/>
</dbReference>
<dbReference type="GO" id="GO:0007031">
    <property type="term" value="P:peroxisome organization"/>
    <property type="evidence" value="ECO:0000315"/>
    <property type="project" value="SGD"/>
</dbReference>
<dbReference type="InterPro" id="IPR006614">
    <property type="entry name" value="Peroxin/Ferlin"/>
</dbReference>
<dbReference type="InterPro" id="IPR052646">
    <property type="entry name" value="Peroxisomal_PEX28-32"/>
</dbReference>
<dbReference type="InterPro" id="IPR010482">
    <property type="entry name" value="TECPR1-like_DysF"/>
</dbReference>
<dbReference type="PANTHER" id="PTHR31679">
    <property type="entry name" value="PEROXISOMAL MEMBRANE PROTEIN PEX30-RELATED"/>
    <property type="match status" value="1"/>
</dbReference>
<dbReference type="PANTHER" id="PTHR31679:SF3">
    <property type="entry name" value="PEROXISOMAL MEMBRANE PROTEIN PEX32"/>
    <property type="match status" value="1"/>
</dbReference>
<dbReference type="Pfam" id="PF06398">
    <property type="entry name" value="Pex24p"/>
    <property type="match status" value="1"/>
</dbReference>
<dbReference type="SMART" id="SM00694">
    <property type="entry name" value="DysFC"/>
    <property type="match status" value="1"/>
</dbReference>
<dbReference type="SMART" id="SM00693">
    <property type="entry name" value="DysFN"/>
    <property type="match status" value="1"/>
</dbReference>
<comment type="subcellular location">
    <subcellularLocation>
        <location evidence="2">Peroxisome membrane</location>
        <topology evidence="2">Multi-pass membrane protein</topology>
    </subcellularLocation>
</comment>
<comment type="similarity">
    <text evidence="3">Belongs to the PEX28-32 family. PEX32 subfamily.</text>
</comment>
<keyword id="KW-0472">Membrane</keyword>
<keyword id="KW-0576">Peroxisome</keyword>
<keyword id="KW-1185">Reference proteome</keyword>
<keyword id="KW-0812">Transmembrane</keyword>
<keyword id="KW-1133">Transmembrane helix</keyword>
<sequence>MDTNSKTKVQTENKKIKAKFIHNHGQKPSLIQITPPMISSTLFHAYPLLLIFDNALANIMWLSDDKCLTFIYLTSIWLTISFFIPVETEASHFLPFTKILRLWLGIISGAFLFLSFMYYIVSLIASLRDTEPPTLDEIVVLLESVLDKLEVLRNELNVWKKLKLSFDGVNKECSGKRLFCRLFLFGTIFQIIIMRYISPGTYTRFFIITGLIYNTSSFQATLRLLWRFTAVRNFYYLGIESFKISSFLPKHLKMEQIIPLSQGRAITVPLVEVLPKLLRDKKGDDHIHILQLLLNEQKDNFGNEDLKILEIEVYENQRRWYQNKNWSTKLLPYERQNYCIEIKNTDGTLTMRSCLPPDGLGEEELPNNWHWINDNWDGTDWIYSDSAWKEIGQYSSLESFTRSRKWKRRLFHL</sequence>